<feature type="chain" id="PRO_0000360158" description="Uncharacterized protein YrvD">
    <location>
        <begin position="1"/>
        <end position="107"/>
    </location>
</feature>
<feature type="transmembrane region" description="Helical" evidence="1">
    <location>
        <begin position="5"/>
        <end position="25"/>
    </location>
</feature>
<feature type="transmembrane region" description="Helical" evidence="1">
    <location>
        <begin position="42"/>
        <end position="62"/>
    </location>
</feature>
<feature type="region of interest" description="Disordered" evidence="2">
    <location>
        <begin position="82"/>
        <end position="107"/>
    </location>
</feature>
<feature type="compositionally biased region" description="Basic and acidic residues" evidence="2">
    <location>
        <begin position="82"/>
        <end position="92"/>
    </location>
</feature>
<name>YRVD_BACSU</name>
<protein>
    <recommendedName>
        <fullName>Uncharacterized protein YrvD</fullName>
    </recommendedName>
</protein>
<dbReference type="EMBL" id="AL009126">
    <property type="protein sequence ID" value="CAB14722.1"/>
    <property type="molecule type" value="Genomic_DNA"/>
</dbReference>
<dbReference type="PIR" id="G69980">
    <property type="entry name" value="G69980"/>
</dbReference>
<dbReference type="RefSeq" id="NP_390641.1">
    <property type="nucleotide sequence ID" value="NC_000964.3"/>
</dbReference>
<dbReference type="RefSeq" id="WP_003229740.1">
    <property type="nucleotide sequence ID" value="NZ_OZ025638.1"/>
</dbReference>
<dbReference type="SMR" id="O32045"/>
<dbReference type="FunCoup" id="O32045">
    <property type="interactions" value="22"/>
</dbReference>
<dbReference type="STRING" id="224308.BSU27630"/>
<dbReference type="PaxDb" id="224308-BSU27630"/>
<dbReference type="EnsemblBacteria" id="CAB14722">
    <property type="protein sequence ID" value="CAB14722"/>
    <property type="gene ID" value="BSU_27630"/>
</dbReference>
<dbReference type="GeneID" id="937537"/>
<dbReference type="KEGG" id="bsu:BSU27630"/>
<dbReference type="PATRIC" id="fig|224308.179.peg.3002"/>
<dbReference type="eggNOG" id="COG5416">
    <property type="taxonomic scope" value="Bacteria"/>
</dbReference>
<dbReference type="InParanoid" id="O32045"/>
<dbReference type="OrthoDB" id="2990728at2"/>
<dbReference type="BioCyc" id="BSUB:BSU27630-MONOMER"/>
<dbReference type="Proteomes" id="UP000001570">
    <property type="component" value="Chromosome"/>
</dbReference>
<dbReference type="GO" id="GO:0005886">
    <property type="term" value="C:plasma membrane"/>
    <property type="evidence" value="ECO:0007669"/>
    <property type="project" value="UniProtKB-SubCell"/>
</dbReference>
<dbReference type="InterPro" id="IPR010445">
    <property type="entry name" value="LapA_dom"/>
</dbReference>
<dbReference type="PANTHER" id="PTHR41335:SF1">
    <property type="entry name" value="MEMBRANE PROTEIN"/>
    <property type="match status" value="1"/>
</dbReference>
<dbReference type="PANTHER" id="PTHR41335">
    <property type="entry name" value="MEMBRANE PROTEIN-RELATED"/>
    <property type="match status" value="1"/>
</dbReference>
<dbReference type="Pfam" id="PF06305">
    <property type="entry name" value="LapA_dom"/>
    <property type="match status" value="1"/>
</dbReference>
<proteinExistence type="predicted"/>
<reference key="1">
    <citation type="journal article" date="1997" name="Nature">
        <title>The complete genome sequence of the Gram-positive bacterium Bacillus subtilis.</title>
        <authorList>
            <person name="Kunst F."/>
            <person name="Ogasawara N."/>
            <person name="Moszer I."/>
            <person name="Albertini A.M."/>
            <person name="Alloni G."/>
            <person name="Azevedo V."/>
            <person name="Bertero M.G."/>
            <person name="Bessieres P."/>
            <person name="Bolotin A."/>
            <person name="Borchert S."/>
            <person name="Borriss R."/>
            <person name="Boursier L."/>
            <person name="Brans A."/>
            <person name="Braun M."/>
            <person name="Brignell S.C."/>
            <person name="Bron S."/>
            <person name="Brouillet S."/>
            <person name="Bruschi C.V."/>
            <person name="Caldwell B."/>
            <person name="Capuano V."/>
            <person name="Carter N.M."/>
            <person name="Choi S.-K."/>
            <person name="Codani J.-J."/>
            <person name="Connerton I.F."/>
            <person name="Cummings N.J."/>
            <person name="Daniel R.A."/>
            <person name="Denizot F."/>
            <person name="Devine K.M."/>
            <person name="Duesterhoeft A."/>
            <person name="Ehrlich S.D."/>
            <person name="Emmerson P.T."/>
            <person name="Entian K.-D."/>
            <person name="Errington J."/>
            <person name="Fabret C."/>
            <person name="Ferrari E."/>
            <person name="Foulger D."/>
            <person name="Fritz C."/>
            <person name="Fujita M."/>
            <person name="Fujita Y."/>
            <person name="Fuma S."/>
            <person name="Galizzi A."/>
            <person name="Galleron N."/>
            <person name="Ghim S.-Y."/>
            <person name="Glaser P."/>
            <person name="Goffeau A."/>
            <person name="Golightly E.J."/>
            <person name="Grandi G."/>
            <person name="Guiseppi G."/>
            <person name="Guy B.J."/>
            <person name="Haga K."/>
            <person name="Haiech J."/>
            <person name="Harwood C.R."/>
            <person name="Henaut A."/>
            <person name="Hilbert H."/>
            <person name="Holsappel S."/>
            <person name="Hosono S."/>
            <person name="Hullo M.-F."/>
            <person name="Itaya M."/>
            <person name="Jones L.-M."/>
            <person name="Joris B."/>
            <person name="Karamata D."/>
            <person name="Kasahara Y."/>
            <person name="Klaerr-Blanchard M."/>
            <person name="Klein C."/>
            <person name="Kobayashi Y."/>
            <person name="Koetter P."/>
            <person name="Koningstein G."/>
            <person name="Krogh S."/>
            <person name="Kumano M."/>
            <person name="Kurita K."/>
            <person name="Lapidus A."/>
            <person name="Lardinois S."/>
            <person name="Lauber J."/>
            <person name="Lazarevic V."/>
            <person name="Lee S.-M."/>
            <person name="Levine A."/>
            <person name="Liu H."/>
            <person name="Masuda S."/>
            <person name="Mauel C."/>
            <person name="Medigue C."/>
            <person name="Medina N."/>
            <person name="Mellado R.P."/>
            <person name="Mizuno M."/>
            <person name="Moestl D."/>
            <person name="Nakai S."/>
            <person name="Noback M."/>
            <person name="Noone D."/>
            <person name="O'Reilly M."/>
            <person name="Ogawa K."/>
            <person name="Ogiwara A."/>
            <person name="Oudega B."/>
            <person name="Park S.-H."/>
            <person name="Parro V."/>
            <person name="Pohl T.M."/>
            <person name="Portetelle D."/>
            <person name="Porwollik S."/>
            <person name="Prescott A.M."/>
            <person name="Presecan E."/>
            <person name="Pujic P."/>
            <person name="Purnelle B."/>
            <person name="Rapoport G."/>
            <person name="Rey M."/>
            <person name="Reynolds S."/>
            <person name="Rieger M."/>
            <person name="Rivolta C."/>
            <person name="Rocha E."/>
            <person name="Roche B."/>
            <person name="Rose M."/>
            <person name="Sadaie Y."/>
            <person name="Sato T."/>
            <person name="Scanlan E."/>
            <person name="Schleich S."/>
            <person name="Schroeter R."/>
            <person name="Scoffone F."/>
            <person name="Sekiguchi J."/>
            <person name="Sekowska A."/>
            <person name="Seror S.J."/>
            <person name="Serror P."/>
            <person name="Shin B.-S."/>
            <person name="Soldo B."/>
            <person name="Sorokin A."/>
            <person name="Tacconi E."/>
            <person name="Takagi T."/>
            <person name="Takahashi H."/>
            <person name="Takemaru K."/>
            <person name="Takeuchi M."/>
            <person name="Tamakoshi A."/>
            <person name="Tanaka T."/>
            <person name="Terpstra P."/>
            <person name="Tognoni A."/>
            <person name="Tosato V."/>
            <person name="Uchiyama S."/>
            <person name="Vandenbol M."/>
            <person name="Vannier F."/>
            <person name="Vassarotti A."/>
            <person name="Viari A."/>
            <person name="Wambutt R."/>
            <person name="Wedler E."/>
            <person name="Wedler H."/>
            <person name="Weitzenegger T."/>
            <person name="Winters P."/>
            <person name="Wipat A."/>
            <person name="Yamamoto H."/>
            <person name="Yamane K."/>
            <person name="Yasumoto K."/>
            <person name="Yata K."/>
            <person name="Yoshida K."/>
            <person name="Yoshikawa H.-F."/>
            <person name="Zumstein E."/>
            <person name="Yoshikawa H."/>
            <person name="Danchin A."/>
        </authorList>
    </citation>
    <scope>NUCLEOTIDE SEQUENCE [LARGE SCALE GENOMIC DNA]</scope>
    <source>
        <strain>168</strain>
    </source>
</reference>
<evidence type="ECO:0000255" key="1"/>
<evidence type="ECO:0000256" key="2">
    <source>
        <dbReference type="SAM" id="MobiDB-lite"/>
    </source>
</evidence>
<evidence type="ECO:0000305" key="3"/>
<comment type="subcellular location">
    <subcellularLocation>
        <location evidence="3">Cell membrane</location>
        <topology evidence="3">Multi-pass membrane protein</topology>
    </subcellularLocation>
</comment>
<gene>
    <name type="primary">yrvD</name>
    <name type="ordered locus">BSU27630</name>
</gene>
<accession>O32045</accession>
<organism>
    <name type="scientific">Bacillus subtilis (strain 168)</name>
    <dbReference type="NCBI Taxonomy" id="224308"/>
    <lineage>
        <taxon>Bacteria</taxon>
        <taxon>Bacillati</taxon>
        <taxon>Bacillota</taxon>
        <taxon>Bacilli</taxon>
        <taxon>Bacillales</taxon>
        <taxon>Bacillaceae</taxon>
        <taxon>Bacillus</taxon>
    </lineage>
</organism>
<keyword id="KW-1003">Cell membrane</keyword>
<keyword id="KW-0472">Membrane</keyword>
<keyword id="KW-1185">Reference proteome</keyword>
<keyword id="KW-0812">Transmembrane</keyword>
<keyword id="KW-1133">Transmembrane helix</keyword>
<sequence>MNKQWTIIFALIFTLIVAIFAVINVRSVEVDYLFGRSEWPLILVILGSVLMGALIVFSVGIFQVMKLKREIKTLRKENRTAIHKQEDTHLADQTDTQDASAMIEKKD</sequence>